<organism>
    <name type="scientific">Arabidopsis thaliana</name>
    <name type="common">Mouse-ear cress</name>
    <dbReference type="NCBI Taxonomy" id="3702"/>
    <lineage>
        <taxon>Eukaryota</taxon>
        <taxon>Viridiplantae</taxon>
        <taxon>Streptophyta</taxon>
        <taxon>Embryophyta</taxon>
        <taxon>Tracheophyta</taxon>
        <taxon>Spermatophyta</taxon>
        <taxon>Magnoliopsida</taxon>
        <taxon>eudicotyledons</taxon>
        <taxon>Gunneridae</taxon>
        <taxon>Pentapetalae</taxon>
        <taxon>rosids</taxon>
        <taxon>malvids</taxon>
        <taxon>Brassicales</taxon>
        <taxon>Brassicaceae</taxon>
        <taxon>Camelineae</taxon>
        <taxon>Arabidopsis</taxon>
    </lineage>
</organism>
<accession>Q56WH1</accession>
<accession>P20363</accession>
<keyword id="KW-0963">Cytoplasm</keyword>
<keyword id="KW-0206">Cytoskeleton</keyword>
<keyword id="KW-0342">GTP-binding</keyword>
<keyword id="KW-0378">Hydrolase</keyword>
<keyword id="KW-0460">Magnesium</keyword>
<keyword id="KW-0479">Metal-binding</keyword>
<keyword id="KW-0493">Microtubule</keyword>
<keyword id="KW-0547">Nucleotide-binding</keyword>
<keyword id="KW-0597">Phosphoprotein</keyword>
<keyword id="KW-1185">Reference proteome</keyword>
<gene>
    <name type="primary">TUBA3</name>
    <name type="synonym">TUA3</name>
    <name type="ordered locus">At5g19770</name>
    <name type="ORF">T29J13.190</name>
</gene>
<evidence type="ECO:0000250" key="1"/>
<evidence type="ECO:0000250" key="2">
    <source>
        <dbReference type="UniProtKB" id="P68363"/>
    </source>
</evidence>
<evidence type="ECO:0000256" key="3">
    <source>
        <dbReference type="SAM" id="MobiDB-lite"/>
    </source>
</evidence>
<evidence type="ECO:0000305" key="4"/>
<evidence type="ECO:0007744" key="5">
    <source>
    </source>
</evidence>
<protein>
    <recommendedName>
        <fullName>Tubulin alpha-3 chain</fullName>
        <ecNumber evidence="2">3.6.5.-</ecNumber>
    </recommendedName>
</protein>
<name>TBA3_ARATH</name>
<dbReference type="EC" id="3.6.5.-" evidence="2"/>
<dbReference type="EMBL" id="M17189">
    <property type="protein sequence ID" value="AAA32888.1"/>
    <property type="molecule type" value="Genomic_DNA"/>
</dbReference>
<dbReference type="EMBL" id="AF296838">
    <property type="status" value="NOT_ANNOTATED_CDS"/>
    <property type="molecule type" value="Genomic_DNA"/>
</dbReference>
<dbReference type="EMBL" id="CP002688">
    <property type="protein sequence ID" value="AED92747.1"/>
    <property type="molecule type" value="Genomic_DNA"/>
</dbReference>
<dbReference type="EMBL" id="AF367301">
    <property type="protein sequence ID" value="AAK32888.1"/>
    <property type="molecule type" value="mRNA"/>
</dbReference>
<dbReference type="EMBL" id="AY065164">
    <property type="protein sequence ID" value="AAL38340.1"/>
    <property type="molecule type" value="mRNA"/>
</dbReference>
<dbReference type="EMBL" id="AY143895">
    <property type="protein sequence ID" value="AAN28834.1"/>
    <property type="molecule type" value="mRNA"/>
</dbReference>
<dbReference type="EMBL" id="BT000718">
    <property type="protein sequence ID" value="AAN31860.1"/>
    <property type="molecule type" value="mRNA"/>
</dbReference>
<dbReference type="EMBL" id="BT000719">
    <property type="protein sequence ID" value="AAN31861.1"/>
    <property type="molecule type" value="mRNA"/>
</dbReference>
<dbReference type="EMBL" id="BT001197">
    <property type="protein sequence ID" value="AAN65084.1"/>
    <property type="molecule type" value="mRNA"/>
</dbReference>
<dbReference type="EMBL" id="AK222069">
    <property type="protein sequence ID" value="BAD94893.1"/>
    <property type="status" value="ALT_INIT"/>
    <property type="molecule type" value="mRNA"/>
</dbReference>
<dbReference type="PIR" id="A32712">
    <property type="entry name" value="A32712"/>
</dbReference>
<dbReference type="RefSeq" id="NP_197478.1">
    <property type="nucleotide sequence ID" value="NM_121982.4"/>
</dbReference>
<dbReference type="SMR" id="Q56WH1"/>
<dbReference type="BioGRID" id="17373">
    <property type="interactions" value="1"/>
</dbReference>
<dbReference type="BioGRID" id="17374">
    <property type="interactions" value="3"/>
</dbReference>
<dbReference type="FunCoup" id="Q56WH1">
    <property type="interactions" value="1448"/>
</dbReference>
<dbReference type="IntAct" id="Q56WH1">
    <property type="interactions" value="1"/>
</dbReference>
<dbReference type="MINT" id="Q56WH1"/>
<dbReference type="STRING" id="3702.Q56WH1"/>
<dbReference type="iPTMnet" id="Q56WH1"/>
<dbReference type="PaxDb" id="3702-AT5G19770.1"/>
<dbReference type="EnsemblPlants" id="AT5G19770.1">
    <property type="protein sequence ID" value="AT5G19770.1"/>
    <property type="gene ID" value="AT5G19770"/>
</dbReference>
<dbReference type="EnsemblPlants" id="AT5G19780.1">
    <property type="protein sequence ID" value="AT5G19780.1"/>
    <property type="gene ID" value="AT5G19780"/>
</dbReference>
<dbReference type="GeneID" id="832097"/>
<dbReference type="Gramene" id="AT5G19770.1">
    <property type="protein sequence ID" value="AT5G19770.1"/>
    <property type="gene ID" value="AT5G19770"/>
</dbReference>
<dbReference type="Gramene" id="AT5G19780.1">
    <property type="protein sequence ID" value="AT5G19780.1"/>
    <property type="gene ID" value="AT5G19780"/>
</dbReference>
<dbReference type="KEGG" id="ath:AT5G19770"/>
<dbReference type="KEGG" id="ath:AT5G19780"/>
<dbReference type="Araport" id="AT5G19770"/>
<dbReference type="TAIR" id="AT5G19770">
    <property type="gene designation" value="TUA3"/>
</dbReference>
<dbReference type="eggNOG" id="KOG1376">
    <property type="taxonomic scope" value="Eukaryota"/>
</dbReference>
<dbReference type="HOGENOM" id="CLU_015718_0_0_1"/>
<dbReference type="InParanoid" id="Q56WH1"/>
<dbReference type="OMA" id="EVRCGAY"/>
<dbReference type="OrthoDB" id="1550216at2759"/>
<dbReference type="PhylomeDB" id="Q56WH1"/>
<dbReference type="CD-CODE" id="4299E36E">
    <property type="entry name" value="Nucleolus"/>
</dbReference>
<dbReference type="PRO" id="PR:Q56WH1"/>
<dbReference type="Proteomes" id="UP000006548">
    <property type="component" value="Chromosome 5"/>
</dbReference>
<dbReference type="ExpressionAtlas" id="Q56WH1">
    <property type="expression patterns" value="baseline and differential"/>
</dbReference>
<dbReference type="GO" id="GO:0005737">
    <property type="term" value="C:cytoplasm"/>
    <property type="evidence" value="ECO:0007669"/>
    <property type="project" value="UniProtKB-KW"/>
</dbReference>
<dbReference type="GO" id="GO:0005874">
    <property type="term" value="C:microtubule"/>
    <property type="evidence" value="ECO:0007669"/>
    <property type="project" value="UniProtKB-KW"/>
</dbReference>
<dbReference type="GO" id="GO:0005525">
    <property type="term" value="F:GTP binding"/>
    <property type="evidence" value="ECO:0007669"/>
    <property type="project" value="UniProtKB-KW"/>
</dbReference>
<dbReference type="GO" id="GO:0016787">
    <property type="term" value="F:hydrolase activity"/>
    <property type="evidence" value="ECO:0007669"/>
    <property type="project" value="UniProtKB-KW"/>
</dbReference>
<dbReference type="GO" id="GO:0046872">
    <property type="term" value="F:metal ion binding"/>
    <property type="evidence" value="ECO:0007669"/>
    <property type="project" value="UniProtKB-KW"/>
</dbReference>
<dbReference type="GO" id="GO:0005200">
    <property type="term" value="F:structural constituent of cytoskeleton"/>
    <property type="evidence" value="ECO:0007669"/>
    <property type="project" value="InterPro"/>
</dbReference>
<dbReference type="GO" id="GO:0007017">
    <property type="term" value="P:microtubule-based process"/>
    <property type="evidence" value="ECO:0007669"/>
    <property type="project" value="InterPro"/>
</dbReference>
<dbReference type="CDD" id="cd02186">
    <property type="entry name" value="alpha_tubulin"/>
    <property type="match status" value="1"/>
</dbReference>
<dbReference type="FunFam" id="1.10.287.600:FF:000005">
    <property type="entry name" value="Tubulin alpha chain"/>
    <property type="match status" value="1"/>
</dbReference>
<dbReference type="FunFam" id="3.30.1330.20:FF:000001">
    <property type="entry name" value="Tubulin alpha chain"/>
    <property type="match status" value="1"/>
</dbReference>
<dbReference type="FunFam" id="3.40.50.1440:FF:000004">
    <property type="entry name" value="Tubulin alpha chain"/>
    <property type="match status" value="1"/>
</dbReference>
<dbReference type="Gene3D" id="1.10.287.600">
    <property type="entry name" value="Helix hairpin bin"/>
    <property type="match status" value="1"/>
</dbReference>
<dbReference type="Gene3D" id="3.30.1330.20">
    <property type="entry name" value="Tubulin/FtsZ, C-terminal domain"/>
    <property type="match status" value="1"/>
</dbReference>
<dbReference type="Gene3D" id="3.40.50.1440">
    <property type="entry name" value="Tubulin/FtsZ, GTPase domain"/>
    <property type="match status" value="1"/>
</dbReference>
<dbReference type="InterPro" id="IPR002452">
    <property type="entry name" value="Alpha_tubulin"/>
</dbReference>
<dbReference type="InterPro" id="IPR013838">
    <property type="entry name" value="Beta-tubulin_BS"/>
</dbReference>
<dbReference type="InterPro" id="IPR008280">
    <property type="entry name" value="Tub_FtsZ_C"/>
</dbReference>
<dbReference type="InterPro" id="IPR000217">
    <property type="entry name" value="Tubulin"/>
</dbReference>
<dbReference type="InterPro" id="IPR037103">
    <property type="entry name" value="Tubulin/FtsZ-like_C"/>
</dbReference>
<dbReference type="InterPro" id="IPR018316">
    <property type="entry name" value="Tubulin/FtsZ_2-layer-sand-dom"/>
</dbReference>
<dbReference type="InterPro" id="IPR036525">
    <property type="entry name" value="Tubulin/FtsZ_GTPase_sf"/>
</dbReference>
<dbReference type="InterPro" id="IPR023123">
    <property type="entry name" value="Tubulin_C"/>
</dbReference>
<dbReference type="InterPro" id="IPR017975">
    <property type="entry name" value="Tubulin_CS"/>
</dbReference>
<dbReference type="InterPro" id="IPR003008">
    <property type="entry name" value="Tubulin_FtsZ_GTPase"/>
</dbReference>
<dbReference type="PANTHER" id="PTHR11588">
    <property type="entry name" value="TUBULIN"/>
    <property type="match status" value="1"/>
</dbReference>
<dbReference type="Pfam" id="PF00091">
    <property type="entry name" value="Tubulin"/>
    <property type="match status" value="1"/>
</dbReference>
<dbReference type="Pfam" id="PF03953">
    <property type="entry name" value="Tubulin_C"/>
    <property type="match status" value="1"/>
</dbReference>
<dbReference type="PRINTS" id="PR01162">
    <property type="entry name" value="ALPHATUBULIN"/>
</dbReference>
<dbReference type="PRINTS" id="PR01161">
    <property type="entry name" value="TUBULIN"/>
</dbReference>
<dbReference type="SMART" id="SM00864">
    <property type="entry name" value="Tubulin"/>
    <property type="match status" value="1"/>
</dbReference>
<dbReference type="SMART" id="SM00865">
    <property type="entry name" value="Tubulin_C"/>
    <property type="match status" value="1"/>
</dbReference>
<dbReference type="SUPFAM" id="SSF55307">
    <property type="entry name" value="Tubulin C-terminal domain-like"/>
    <property type="match status" value="1"/>
</dbReference>
<dbReference type="SUPFAM" id="SSF52490">
    <property type="entry name" value="Tubulin nucleotide-binding domain-like"/>
    <property type="match status" value="1"/>
</dbReference>
<dbReference type="PROSITE" id="PS00227">
    <property type="entry name" value="TUBULIN"/>
    <property type="match status" value="1"/>
</dbReference>
<proteinExistence type="evidence at protein level"/>
<feature type="chain" id="PRO_0000048138" description="Tubulin alpha-3 chain">
    <location>
        <begin position="1"/>
        <end position="450"/>
    </location>
</feature>
<feature type="region of interest" description="Disordered" evidence="3">
    <location>
        <begin position="429"/>
        <end position="450"/>
    </location>
</feature>
<feature type="compositionally biased region" description="Acidic residues" evidence="3">
    <location>
        <begin position="431"/>
        <end position="450"/>
    </location>
</feature>
<feature type="active site" evidence="2">
    <location>
        <position position="254"/>
    </location>
</feature>
<feature type="binding site" evidence="2">
    <location>
        <position position="11"/>
    </location>
    <ligand>
        <name>GTP</name>
        <dbReference type="ChEBI" id="CHEBI:37565"/>
    </ligand>
</feature>
<feature type="binding site" evidence="2">
    <location>
        <position position="71"/>
    </location>
    <ligand>
        <name>GTP</name>
        <dbReference type="ChEBI" id="CHEBI:37565"/>
    </ligand>
</feature>
<feature type="binding site" evidence="2">
    <location>
        <position position="71"/>
    </location>
    <ligand>
        <name>Mg(2+)</name>
        <dbReference type="ChEBI" id="CHEBI:18420"/>
    </ligand>
</feature>
<feature type="binding site" evidence="2">
    <location>
        <position position="144"/>
    </location>
    <ligand>
        <name>GTP</name>
        <dbReference type="ChEBI" id="CHEBI:37565"/>
    </ligand>
</feature>
<feature type="binding site" evidence="2">
    <location>
        <position position="145"/>
    </location>
    <ligand>
        <name>GTP</name>
        <dbReference type="ChEBI" id="CHEBI:37565"/>
    </ligand>
</feature>
<feature type="binding site" evidence="2">
    <location>
        <position position="179"/>
    </location>
    <ligand>
        <name>GTP</name>
        <dbReference type="ChEBI" id="CHEBI:37565"/>
    </ligand>
</feature>
<feature type="binding site" evidence="2">
    <location>
        <position position="206"/>
    </location>
    <ligand>
        <name>GTP</name>
        <dbReference type="ChEBI" id="CHEBI:37565"/>
    </ligand>
</feature>
<feature type="binding site" evidence="2">
    <location>
        <position position="228"/>
    </location>
    <ligand>
        <name>GTP</name>
        <dbReference type="ChEBI" id="CHEBI:37565"/>
    </ligand>
</feature>
<feature type="site" description="Involved in polymerization">
    <location>
        <position position="450"/>
    </location>
</feature>
<feature type="modified residue" description="Phosphothreonine" evidence="5">
    <location>
        <position position="349"/>
    </location>
</feature>
<feature type="sequence conflict" description="In Ref. 5; BAD94893." evidence="4" ref="5">
    <original>R</original>
    <variation>K</variation>
    <location>
        <position position="308"/>
    </location>
</feature>
<reference key="1">
    <citation type="journal article" date="1987" name="Proc. Natl. Acad. Sci. U.S.A.">
        <title>Characterization of the alpha-tubulin gene family of Arabidopsis thaliana.</title>
        <authorList>
            <person name="Ludwig S.R."/>
            <person name="Oppenheimer D.G."/>
            <person name="Silflow C.D."/>
            <person name="Snustad D.P."/>
        </authorList>
    </citation>
    <scope>NUCLEOTIDE SEQUENCE [GENOMIC DNA]</scope>
</reference>
<reference key="2">
    <citation type="journal article" date="2000" name="Nature">
        <title>Sequence and analysis of chromosome 5 of the plant Arabidopsis thaliana.</title>
        <authorList>
            <person name="Tabata S."/>
            <person name="Kaneko T."/>
            <person name="Nakamura Y."/>
            <person name="Kotani H."/>
            <person name="Kato T."/>
            <person name="Asamizu E."/>
            <person name="Miyajima N."/>
            <person name="Sasamoto S."/>
            <person name="Kimura T."/>
            <person name="Hosouchi T."/>
            <person name="Kawashima K."/>
            <person name="Kohara M."/>
            <person name="Matsumoto M."/>
            <person name="Matsuno A."/>
            <person name="Muraki A."/>
            <person name="Nakayama S."/>
            <person name="Nakazaki N."/>
            <person name="Naruo K."/>
            <person name="Okumura S."/>
            <person name="Shinpo S."/>
            <person name="Takeuchi C."/>
            <person name="Wada T."/>
            <person name="Watanabe A."/>
            <person name="Yamada M."/>
            <person name="Yasuda M."/>
            <person name="Sato S."/>
            <person name="de la Bastide M."/>
            <person name="Huang E."/>
            <person name="Spiegel L."/>
            <person name="Gnoj L."/>
            <person name="O'Shaughnessy A."/>
            <person name="Preston R."/>
            <person name="Habermann K."/>
            <person name="Murray J."/>
            <person name="Johnson D."/>
            <person name="Rohlfing T."/>
            <person name="Nelson J."/>
            <person name="Stoneking T."/>
            <person name="Pepin K."/>
            <person name="Spieth J."/>
            <person name="Sekhon M."/>
            <person name="Armstrong J."/>
            <person name="Becker M."/>
            <person name="Belter E."/>
            <person name="Cordum H."/>
            <person name="Cordes M."/>
            <person name="Courtney L."/>
            <person name="Courtney W."/>
            <person name="Dante M."/>
            <person name="Du H."/>
            <person name="Edwards J."/>
            <person name="Fryman J."/>
            <person name="Haakensen B."/>
            <person name="Lamar E."/>
            <person name="Latreille P."/>
            <person name="Leonard S."/>
            <person name="Meyer R."/>
            <person name="Mulvaney E."/>
            <person name="Ozersky P."/>
            <person name="Riley A."/>
            <person name="Strowmatt C."/>
            <person name="Wagner-McPherson C."/>
            <person name="Wollam A."/>
            <person name="Yoakum M."/>
            <person name="Bell M."/>
            <person name="Dedhia N."/>
            <person name="Parnell L."/>
            <person name="Shah R."/>
            <person name="Rodriguez M."/>
            <person name="Hoon See L."/>
            <person name="Vil D."/>
            <person name="Baker J."/>
            <person name="Kirchoff K."/>
            <person name="Toth K."/>
            <person name="King L."/>
            <person name="Bahret A."/>
            <person name="Miller B."/>
            <person name="Marra M.A."/>
            <person name="Martienssen R."/>
            <person name="McCombie W.R."/>
            <person name="Wilson R.K."/>
            <person name="Murphy G."/>
            <person name="Bancroft I."/>
            <person name="Volckaert G."/>
            <person name="Wambutt R."/>
            <person name="Duesterhoeft A."/>
            <person name="Stiekema W."/>
            <person name="Pohl T."/>
            <person name="Entian K.-D."/>
            <person name="Terryn N."/>
            <person name="Hartley N."/>
            <person name="Bent E."/>
            <person name="Johnson S."/>
            <person name="Langham S.-A."/>
            <person name="McCullagh B."/>
            <person name="Robben J."/>
            <person name="Grymonprez B."/>
            <person name="Zimmermann W."/>
            <person name="Ramsperger U."/>
            <person name="Wedler H."/>
            <person name="Balke K."/>
            <person name="Wedler E."/>
            <person name="Peters S."/>
            <person name="van Staveren M."/>
            <person name="Dirkse W."/>
            <person name="Mooijman P."/>
            <person name="Klein Lankhorst R."/>
            <person name="Weitzenegger T."/>
            <person name="Bothe G."/>
            <person name="Rose M."/>
            <person name="Hauf J."/>
            <person name="Berneiser S."/>
            <person name="Hempel S."/>
            <person name="Feldpausch M."/>
            <person name="Lamberth S."/>
            <person name="Villarroel R."/>
            <person name="Gielen J."/>
            <person name="Ardiles W."/>
            <person name="Bents O."/>
            <person name="Lemcke K."/>
            <person name="Kolesov G."/>
            <person name="Mayer K.F.X."/>
            <person name="Rudd S."/>
            <person name="Schoof H."/>
            <person name="Schueller C."/>
            <person name="Zaccaria P."/>
            <person name="Mewes H.-W."/>
            <person name="Bevan M."/>
            <person name="Fransz P.F."/>
        </authorList>
    </citation>
    <scope>NUCLEOTIDE SEQUENCE [LARGE SCALE GENOMIC DNA]</scope>
    <source>
        <strain>cv. Columbia</strain>
    </source>
</reference>
<reference key="3">
    <citation type="journal article" date="2017" name="Plant J.">
        <title>Araport11: a complete reannotation of the Arabidopsis thaliana reference genome.</title>
        <authorList>
            <person name="Cheng C.Y."/>
            <person name="Krishnakumar V."/>
            <person name="Chan A.P."/>
            <person name="Thibaud-Nissen F."/>
            <person name="Schobel S."/>
            <person name="Town C.D."/>
        </authorList>
    </citation>
    <scope>GENOME REANNOTATION</scope>
    <source>
        <strain>cv. Columbia</strain>
    </source>
</reference>
<reference key="4">
    <citation type="journal article" date="2003" name="Science">
        <title>Empirical analysis of transcriptional activity in the Arabidopsis genome.</title>
        <authorList>
            <person name="Yamada K."/>
            <person name="Lim J."/>
            <person name="Dale J.M."/>
            <person name="Chen H."/>
            <person name="Shinn P."/>
            <person name="Palm C.J."/>
            <person name="Southwick A.M."/>
            <person name="Wu H.C."/>
            <person name="Kim C.J."/>
            <person name="Nguyen M."/>
            <person name="Pham P.K."/>
            <person name="Cheuk R.F."/>
            <person name="Karlin-Newmann G."/>
            <person name="Liu S.X."/>
            <person name="Lam B."/>
            <person name="Sakano H."/>
            <person name="Wu T."/>
            <person name="Yu G."/>
            <person name="Miranda M."/>
            <person name="Quach H.L."/>
            <person name="Tripp M."/>
            <person name="Chang C.H."/>
            <person name="Lee J.M."/>
            <person name="Toriumi M.J."/>
            <person name="Chan M.M."/>
            <person name="Tang C.C."/>
            <person name="Onodera C.S."/>
            <person name="Deng J.M."/>
            <person name="Akiyama K."/>
            <person name="Ansari Y."/>
            <person name="Arakawa T."/>
            <person name="Banh J."/>
            <person name="Banno F."/>
            <person name="Bowser L."/>
            <person name="Brooks S.Y."/>
            <person name="Carninci P."/>
            <person name="Chao Q."/>
            <person name="Choy N."/>
            <person name="Enju A."/>
            <person name="Goldsmith A.D."/>
            <person name="Gurjal M."/>
            <person name="Hansen N.F."/>
            <person name="Hayashizaki Y."/>
            <person name="Johnson-Hopson C."/>
            <person name="Hsuan V.W."/>
            <person name="Iida K."/>
            <person name="Karnes M."/>
            <person name="Khan S."/>
            <person name="Koesema E."/>
            <person name="Ishida J."/>
            <person name="Jiang P.X."/>
            <person name="Jones T."/>
            <person name="Kawai J."/>
            <person name="Kamiya A."/>
            <person name="Meyers C."/>
            <person name="Nakajima M."/>
            <person name="Narusaka M."/>
            <person name="Seki M."/>
            <person name="Sakurai T."/>
            <person name="Satou M."/>
            <person name="Tamse R."/>
            <person name="Vaysberg M."/>
            <person name="Wallender E.K."/>
            <person name="Wong C."/>
            <person name="Yamamura Y."/>
            <person name="Yuan S."/>
            <person name="Shinozaki K."/>
            <person name="Davis R.W."/>
            <person name="Theologis A."/>
            <person name="Ecker J.R."/>
        </authorList>
    </citation>
    <scope>NUCLEOTIDE SEQUENCE [LARGE SCALE MRNA]</scope>
    <source>
        <strain>cv. Columbia</strain>
    </source>
</reference>
<reference key="5">
    <citation type="submission" date="2005-03" db="EMBL/GenBank/DDBJ databases">
        <title>Large-scale analysis of RIKEN Arabidopsis full-length (RAFL) cDNAs.</title>
        <authorList>
            <person name="Totoki Y."/>
            <person name="Seki M."/>
            <person name="Ishida J."/>
            <person name="Nakajima M."/>
            <person name="Enju A."/>
            <person name="Kamiya A."/>
            <person name="Narusaka M."/>
            <person name="Shin-i T."/>
            <person name="Nakagawa M."/>
            <person name="Sakamoto N."/>
            <person name="Oishi K."/>
            <person name="Kohara Y."/>
            <person name="Kobayashi M."/>
            <person name="Toyoda A."/>
            <person name="Sakaki Y."/>
            <person name="Sakurai T."/>
            <person name="Iida K."/>
            <person name="Akiyama K."/>
            <person name="Satou M."/>
            <person name="Toyoda T."/>
            <person name="Konagaya A."/>
            <person name="Carninci P."/>
            <person name="Kawai J."/>
            <person name="Hayashizaki Y."/>
            <person name="Shinozaki K."/>
        </authorList>
    </citation>
    <scope>NUCLEOTIDE SEQUENCE [LARGE SCALE MRNA] OF 255-450</scope>
    <source>
        <strain>cv. Columbia</strain>
    </source>
</reference>
<reference key="6">
    <citation type="journal article" date="2008" name="J. Proteome Res.">
        <title>Site-specific phosphorylation profiling of Arabidopsis proteins by mass spectrometry and peptide chip analysis.</title>
        <authorList>
            <person name="de la Fuente van Bentem S."/>
            <person name="Anrather D."/>
            <person name="Dohnal I."/>
            <person name="Roitinger E."/>
            <person name="Csaszar E."/>
            <person name="Joore J."/>
            <person name="Buijnink J."/>
            <person name="Carreri A."/>
            <person name="Forzani C."/>
            <person name="Lorkovic Z.J."/>
            <person name="Barta A."/>
            <person name="Lecourieux D."/>
            <person name="Verhounig A."/>
            <person name="Jonak C."/>
            <person name="Hirt H."/>
        </authorList>
    </citation>
    <scope>IDENTIFICATION BY MASS SPECTROMETRY [LARGE SCALE ANALYSIS]</scope>
    <source>
        <tissue>Root</tissue>
    </source>
</reference>
<reference key="7">
    <citation type="journal article" date="2009" name="J. Proteomics">
        <title>Phosphoproteomic analysis of nuclei-enriched fractions from Arabidopsis thaliana.</title>
        <authorList>
            <person name="Jones A.M.E."/>
            <person name="MacLean D."/>
            <person name="Studholme D.J."/>
            <person name="Serna-Sanz A."/>
            <person name="Andreasson E."/>
            <person name="Rathjen J.P."/>
            <person name="Peck S.C."/>
        </authorList>
    </citation>
    <scope>IDENTIFICATION BY MASS SPECTROMETRY [LARGE SCALE ANALYSIS]</scope>
    <source>
        <strain>cv. Columbia</strain>
    </source>
</reference>
<reference key="8">
    <citation type="journal article" date="2009" name="Plant Physiol.">
        <title>Large-scale Arabidopsis phosphoproteome profiling reveals novel chloroplast kinase substrates and phosphorylation networks.</title>
        <authorList>
            <person name="Reiland S."/>
            <person name="Messerli G."/>
            <person name="Baerenfaller K."/>
            <person name="Gerrits B."/>
            <person name="Endler A."/>
            <person name="Grossmann J."/>
            <person name="Gruissem W."/>
            <person name="Baginsky S."/>
        </authorList>
    </citation>
    <scope>PHOSPHORYLATION [LARGE SCALE ANALYSIS] AT THR-349</scope>
    <scope>IDENTIFICATION BY MASS SPECTROMETRY [LARGE SCALE ANALYSIS]</scope>
</reference>
<sequence length="450" mass="49654">MREIISIHIGQAGIQVGNSCWELYCLEHGIQPDGMMPSDTTVGVAHDAFNTFFSETGAGKHVPRAVFVDLEPTVIDEVRTGTYRQLFHPEQLISGKEDAANNFARGHYTVGKEIVDLCLDRVRKLADNCTGLQGFLVFNAVGGGTGSGLGSLLLERLSVDYGKKSKLGFTIYPSPQVSTAVVEPYNSVLSTHSLLEHTDVAVLLDNEAIYDICRRSLDIERPTYTNLNRLISQIISSLTTSLRFDGAINVDITEFQTNLVPYPRIHFMLSSYAPVISAAKAYHEQLSVPEITNAVFEPASMMAKCDPRHGKYMACCLMYRGDVVPKDVNAAVGTIKTKRTVQFVDWCPTGFKCGINYQPPTVVPGGDLAKVQRAVCMISNNTAVAEVFSRIDHKFDLMYAKRAFVHWYVGEGMEEGEFSEAREDLAALEKDYEEVGAEGGDDEEDEGEDY</sequence>
<comment type="function">
    <text>Tubulin is the major constituent of microtubules, a cylinder consisting of laterally associated linear protofilaments composed of alpha- and beta-tubulin heterodimers. Microtubules grow by the addition of GTP-tubulin dimers to the microtubule end, where a stabilizing cap forms. Below the cap, tubulin dimers are in GDP-bound state, owing to GTPase activity of alpha-tubulin.</text>
</comment>
<comment type="catalytic activity">
    <reaction evidence="2">
        <text>GTP + H2O = GDP + phosphate + H(+)</text>
        <dbReference type="Rhea" id="RHEA:19669"/>
        <dbReference type="ChEBI" id="CHEBI:15377"/>
        <dbReference type="ChEBI" id="CHEBI:15378"/>
        <dbReference type="ChEBI" id="CHEBI:37565"/>
        <dbReference type="ChEBI" id="CHEBI:43474"/>
        <dbReference type="ChEBI" id="CHEBI:58189"/>
    </reaction>
    <physiologicalReaction direction="left-to-right" evidence="2">
        <dbReference type="Rhea" id="RHEA:19670"/>
    </physiologicalReaction>
</comment>
<comment type="cofactor">
    <cofactor evidence="2">
        <name>Mg(2+)</name>
        <dbReference type="ChEBI" id="CHEBI:18420"/>
    </cofactor>
</comment>
<comment type="subunit">
    <text>Dimer of alpha and beta chains. A typical microtubule is a hollow water-filled tube with an outer diameter of 25 nm and an inner diameter of 15 nM. Alpha-beta heterodimers associate head-to-tail to form protofilaments running lengthwise along the microtubule wall with the beta-tubulin subunit facing the microtubule plus end conferring a structural polarity. Microtubules usually have 13 protofilaments but different protofilament numbers can be found in some organisms and specialized cells.</text>
</comment>
<comment type="subcellular location">
    <subcellularLocation>
        <location>Cytoplasm</location>
        <location>Cytoskeleton</location>
    </subcellularLocation>
</comment>
<comment type="PTM">
    <text evidence="1">Undergoes a tyrosination/detyrosination cycle, the cyclic removal and re-addition of a C-terminal tyrosine residue by the enzymes tubulin tyrosine carboxypeptidase (TTCP) and tubulin tyrosine ligase (TTL), respectively.</text>
</comment>
<comment type="miscellaneous">
    <text>There are six genes coding for alpha-tubulin. The sequences coded by genes 3 and 5 are identical.</text>
</comment>
<comment type="similarity">
    <text evidence="4">Belongs to the tubulin family.</text>
</comment>
<comment type="sequence caution" evidence="4">
    <conflict type="erroneous initiation">
        <sequence resource="EMBL-CDS" id="BAD94893"/>
    </conflict>
    <text>Truncated N-terminus.</text>
</comment>